<name>METAA_STRP2</name>
<evidence type="ECO:0000255" key="1">
    <source>
        <dbReference type="HAMAP-Rule" id="MF_00295"/>
    </source>
</evidence>
<keyword id="KW-0012">Acyltransferase</keyword>
<keyword id="KW-0028">Amino-acid biosynthesis</keyword>
<keyword id="KW-0963">Cytoplasm</keyword>
<keyword id="KW-0486">Methionine biosynthesis</keyword>
<keyword id="KW-1185">Reference proteome</keyword>
<keyword id="KW-0808">Transferase</keyword>
<proteinExistence type="inferred from homology"/>
<dbReference type="EC" id="2.3.1.31" evidence="1"/>
<dbReference type="EMBL" id="CP000410">
    <property type="protein sequence ID" value="ABJ55179.1"/>
    <property type="molecule type" value="Genomic_DNA"/>
</dbReference>
<dbReference type="SMR" id="Q04JH2"/>
<dbReference type="PaxDb" id="373153-SPD_1406"/>
<dbReference type="KEGG" id="spd:SPD_1406"/>
<dbReference type="eggNOG" id="COG1897">
    <property type="taxonomic scope" value="Bacteria"/>
</dbReference>
<dbReference type="HOGENOM" id="CLU_057851_0_1_9"/>
<dbReference type="BioCyc" id="SPNE373153:G1G6V-1512-MONOMER"/>
<dbReference type="UniPathway" id="UPA00051">
    <property type="reaction ID" value="UER00074"/>
</dbReference>
<dbReference type="Proteomes" id="UP000001452">
    <property type="component" value="Chromosome"/>
</dbReference>
<dbReference type="GO" id="GO:0005737">
    <property type="term" value="C:cytoplasm"/>
    <property type="evidence" value="ECO:0007669"/>
    <property type="project" value="UniProtKB-SubCell"/>
</dbReference>
<dbReference type="GO" id="GO:0004414">
    <property type="term" value="F:homoserine O-acetyltransferase activity"/>
    <property type="evidence" value="ECO:0007669"/>
    <property type="project" value="UniProtKB-EC"/>
</dbReference>
<dbReference type="GO" id="GO:0008899">
    <property type="term" value="F:homoserine O-succinyltransferase activity"/>
    <property type="evidence" value="ECO:0007669"/>
    <property type="project" value="UniProtKB-UniRule"/>
</dbReference>
<dbReference type="GO" id="GO:0019281">
    <property type="term" value="P:L-methionine biosynthetic process from homoserine via O-succinyl-L-homoserine and cystathionine"/>
    <property type="evidence" value="ECO:0007669"/>
    <property type="project" value="InterPro"/>
</dbReference>
<dbReference type="CDD" id="cd03131">
    <property type="entry name" value="GATase1_HTS"/>
    <property type="match status" value="1"/>
</dbReference>
<dbReference type="FunFam" id="3.40.50.880:FF:000004">
    <property type="entry name" value="Homoserine O-succinyltransferase"/>
    <property type="match status" value="1"/>
</dbReference>
<dbReference type="Gene3D" id="3.40.50.880">
    <property type="match status" value="1"/>
</dbReference>
<dbReference type="HAMAP" id="MF_00295">
    <property type="entry name" value="MetA_acyltransf"/>
    <property type="match status" value="1"/>
</dbReference>
<dbReference type="InterPro" id="IPR029062">
    <property type="entry name" value="Class_I_gatase-like"/>
</dbReference>
<dbReference type="InterPro" id="IPR005697">
    <property type="entry name" value="HST_MetA"/>
</dbReference>
<dbReference type="InterPro" id="IPR033752">
    <property type="entry name" value="MetA_family"/>
</dbReference>
<dbReference type="NCBIfam" id="TIGR01001">
    <property type="entry name" value="metA"/>
    <property type="match status" value="1"/>
</dbReference>
<dbReference type="PANTHER" id="PTHR20919">
    <property type="entry name" value="HOMOSERINE O-SUCCINYLTRANSFERASE"/>
    <property type="match status" value="1"/>
</dbReference>
<dbReference type="PANTHER" id="PTHR20919:SF0">
    <property type="entry name" value="HOMOSERINE O-SUCCINYLTRANSFERASE"/>
    <property type="match status" value="1"/>
</dbReference>
<dbReference type="Pfam" id="PF04204">
    <property type="entry name" value="HTS"/>
    <property type="match status" value="1"/>
</dbReference>
<dbReference type="PIRSF" id="PIRSF000450">
    <property type="entry name" value="H_ser_succinyltr"/>
    <property type="match status" value="1"/>
</dbReference>
<dbReference type="SUPFAM" id="SSF52317">
    <property type="entry name" value="Class I glutamine amidotransferase-like"/>
    <property type="match status" value="1"/>
</dbReference>
<protein>
    <recommendedName>
        <fullName evidence="1">Homoserine O-acetyltransferase</fullName>
        <shortName evidence="1">HAT</shortName>
        <ecNumber evidence="1">2.3.1.31</ecNumber>
    </recommendedName>
    <alternativeName>
        <fullName evidence="1">Homoserine transacetylase</fullName>
        <shortName evidence="1">HTA</shortName>
    </alternativeName>
</protein>
<gene>
    <name evidence="1" type="primary">metAA</name>
    <name type="ordered locus">SPD_1406</name>
</gene>
<sequence length="314" mass="36926">MPIRIDKKLPAVEILRTENIFVMDDQRAAHQDIRPLKILILNLMPQKMVTETQLLRHLANTPLQLDIDFLYMESHRSKTTRSEHMETFYKTFPEVKDEYFDGMIITGAPVEHLPFEEVDYWEEFRQMLEWSKTHVYSTLHICWGAQAGLYLRYGVEKYQMDSKLSGIYPQDTLKEGHLLFRGFDDSYVSPHSRHTEISKEEVLNKTNLEILSEGPQVGVSILASRDLREIYSFGHLEYDRDTLAKEYFRDRDAGFDPHIPENYFKDDDVNQVPCLCWSSSAALFFSNWVNHAVYQETPFDWRKIEDDASAYGYL</sequence>
<accession>Q04JH2</accession>
<comment type="function">
    <text evidence="1">Transfers an acetyl group from acetyl-CoA to L-homoserine, forming acetyl-L-homoserine.</text>
</comment>
<comment type="catalytic activity">
    <reaction evidence="1">
        <text>L-homoserine + acetyl-CoA = O-acetyl-L-homoserine + CoA</text>
        <dbReference type="Rhea" id="RHEA:13701"/>
        <dbReference type="ChEBI" id="CHEBI:57287"/>
        <dbReference type="ChEBI" id="CHEBI:57288"/>
        <dbReference type="ChEBI" id="CHEBI:57476"/>
        <dbReference type="ChEBI" id="CHEBI:57716"/>
        <dbReference type="EC" id="2.3.1.31"/>
    </reaction>
</comment>
<comment type="pathway">
    <text evidence="1">Amino-acid biosynthesis; L-methionine biosynthesis via de novo pathway; O-acetyl-L-homoserine from L-homoserine: step 1/1.</text>
</comment>
<comment type="subcellular location">
    <subcellularLocation>
        <location evidence="1">Cytoplasm</location>
    </subcellularLocation>
</comment>
<comment type="similarity">
    <text evidence="1">Belongs to the MetA family.</text>
</comment>
<reference key="1">
    <citation type="journal article" date="2007" name="J. Bacteriol.">
        <title>Genome sequence of Avery's virulent serotype 2 strain D39 of Streptococcus pneumoniae and comparison with that of unencapsulated laboratory strain R6.</title>
        <authorList>
            <person name="Lanie J.A."/>
            <person name="Ng W.-L."/>
            <person name="Kazmierczak K.M."/>
            <person name="Andrzejewski T.M."/>
            <person name="Davidsen T.M."/>
            <person name="Wayne K.J."/>
            <person name="Tettelin H."/>
            <person name="Glass J.I."/>
            <person name="Winkler M.E."/>
        </authorList>
    </citation>
    <scope>NUCLEOTIDE SEQUENCE [LARGE SCALE GENOMIC DNA]</scope>
    <source>
        <strain>D39 / NCTC 7466</strain>
    </source>
</reference>
<organism>
    <name type="scientific">Streptococcus pneumoniae serotype 2 (strain D39 / NCTC 7466)</name>
    <dbReference type="NCBI Taxonomy" id="373153"/>
    <lineage>
        <taxon>Bacteria</taxon>
        <taxon>Bacillati</taxon>
        <taxon>Bacillota</taxon>
        <taxon>Bacilli</taxon>
        <taxon>Lactobacillales</taxon>
        <taxon>Streptococcaceae</taxon>
        <taxon>Streptococcus</taxon>
    </lineage>
</organism>
<feature type="chain" id="PRO_1000021851" description="Homoserine O-acetyltransferase">
    <location>
        <begin position="1"/>
        <end position="314"/>
    </location>
</feature>
<feature type="active site" description="Acyl-thioester intermediate" evidence="1">
    <location>
        <position position="142"/>
    </location>
</feature>
<feature type="active site" description="Proton acceptor" evidence="1">
    <location>
        <position position="235"/>
    </location>
</feature>
<feature type="active site" evidence="1">
    <location>
        <position position="237"/>
    </location>
</feature>
<feature type="binding site" evidence="1">
    <location>
        <position position="163"/>
    </location>
    <ligand>
        <name>substrate</name>
    </ligand>
</feature>
<feature type="binding site" evidence="1">
    <location>
        <position position="192"/>
    </location>
    <ligand>
        <name>substrate</name>
    </ligand>
</feature>
<feature type="binding site" evidence="1">
    <location>
        <position position="249"/>
    </location>
    <ligand>
        <name>substrate</name>
    </ligand>
</feature>
<feature type="site" description="Important for acyl-CoA specificity" evidence="1">
    <location>
        <position position="111"/>
    </location>
</feature>
<feature type="site" description="Important for substrate specificity" evidence="1">
    <location>
        <position position="192"/>
    </location>
</feature>